<sequence length="541" mass="61230">MSTNLLRLILLFITLSITSSLSTPSPADSPPYLWPLPAEFSFGNETLSVDPTVTLIVAGNGGGSLIIRAAFDRYMGIIFKHASGRGSLLSRIRFLKMVEYDITSLKIVVHSDSEELQLGVDESYTLMVSKKNEQSIVGAATIEANTVYGALRGLETFSQLCAFDYITKSVQIYKAPWYIQDKPRFGYRGLLIDTSRHYLPIDVIKQIIESMSFAKLNVLHWHIVDEQSFPLETPTYPNLWKGAYSRWERYTVEDASEIVRFAKMRGINVMAEVDVPGHAESWGTGYPDLWPSLSCREPLDVTKNFTFDVISGILADMRKIFPFELFHLGGDEVNTDCWKNTTHVKEWLQGRNFTTKDAYKYFVLRAQQIAISKNWTPVNWEETFSSFGKDLDPRTVIQNWLVSDICQKAVAKGFRCIFSNQGYWYLDHLDVPWEEVYNTEPLNGIEDPSLQKLVIGGEVCMWGETADTSVVLQTIWPRAAAAAERMWSTREAVSKGNITLTALPRLHYFRCLLNNRGVPAAPVDNFYARRPPLGPGSCYAQ</sequence>
<comment type="function">
    <text evidence="3 4 5">Has a broad substrate specificity. Can use synthetic substrates such as pyridylaminated chitotriose, pyridylaminated chitobiose, p-nitrophenyl-beta-N-acetylglucosaminide, p-nitrophenyl-2-acetamido-2-deoxy-beta-D-glucopyranoside (pNP-GlcNAc), p-nitrophenyl-2-acetamido-2-deoxy-beta-D-galactopyranoside (pNP-GalNAc), 4-methylumbelliferyl-2-acetamido-2-deoxy-beta-D-glucopyranoside (MU-GlcNAc), and 4-methylumbelliferyl-6-sulfo-2-acetamido-2-deoxy-beta-D-glucopyranoside (MU-GlcNAc-6SO(4)) as substrates. Removes terminal GlcNAc residues from alpha1,3- and alpha1,6-mannosyl branches of biantennary N-glycans without any strict branch preference. Required for the presence of paucimannosidic N-glycans in glycoproteins of roots and, to a lower extent, of leaves.</text>
</comment>
<comment type="catalytic activity">
    <reaction evidence="4">
        <text>Hydrolysis of terminal non-reducing N-acetyl-D-hexosamine residues in N-acetyl-beta-D-hexosaminides.</text>
        <dbReference type="EC" id="3.2.1.52"/>
    </reaction>
</comment>
<comment type="activity regulation">
    <text evidence="3">Inhibited by N-acetylcastanospermine, 2-acet-amido-1,2-dideoxynojirimycin and PUGNAc.</text>
</comment>
<comment type="biophysicochemical properties">
    <kinetics>
        <KM evidence="3 4">0.7 mM for pNP-GlcNAc (at pH 4.6 and 37 degrees Celsius)</KM>
        <Vmax evidence="3 4">151.0 umol/min/mg enzyme with pNP-GlcNAc as substrate (at pH 4.6 and 37 degrees Celsius)</Vmax>
    </kinetics>
    <phDependence>
        <text evidence="3 4">Optimum pH is 4-5.</text>
    </phDependence>
</comment>
<comment type="subcellular location">
    <subcellularLocation>
        <location evidence="4 5">Vacuole</location>
    </subcellularLocation>
</comment>
<comment type="tissue specificity">
    <text evidence="4">Expressed in roots, leaves, stems, flowers and siliques.</text>
</comment>
<comment type="PTM">
    <text evidence="4">N-glycosylated.</text>
</comment>
<comment type="disruption phenotype">
    <text evidence="5">Reduced amounts of paucimannosidic N-glycans-containing glycoproteins in roots and, to a lower extent, in leaves.</text>
</comment>
<comment type="similarity">
    <text evidence="6">Belongs to the glycosyl hydrolase 20 family.</text>
</comment>
<comment type="sequence caution" evidence="6">
    <conflict type="erroneous initiation">
        <sequence resource="EMBL-CDS" id="AAM61367"/>
    </conflict>
    <text>Truncated N-terminus.</text>
</comment>
<comment type="sequence caution" evidence="6">
    <conflict type="erroneous gene model prediction">
        <sequence resource="EMBL-CDS" id="CAB75760"/>
    </conflict>
</comment>
<organism>
    <name type="scientific">Arabidopsis thaliana</name>
    <name type="common">Mouse-ear cress</name>
    <dbReference type="NCBI Taxonomy" id="3702"/>
    <lineage>
        <taxon>Eukaryota</taxon>
        <taxon>Viridiplantae</taxon>
        <taxon>Streptophyta</taxon>
        <taxon>Embryophyta</taxon>
        <taxon>Tracheophyta</taxon>
        <taxon>Spermatophyta</taxon>
        <taxon>Magnoliopsida</taxon>
        <taxon>eudicotyledons</taxon>
        <taxon>Gunneridae</taxon>
        <taxon>Pentapetalae</taxon>
        <taxon>rosids</taxon>
        <taxon>malvids</taxon>
        <taxon>Brassicales</taxon>
        <taxon>Brassicaceae</taxon>
        <taxon>Camelineae</taxon>
        <taxon>Arabidopsis</taxon>
    </lineage>
</organism>
<gene>
    <name type="primary">HEXO1</name>
    <name type="synonym">HEX2</name>
    <name type="ordered locus">At3g55260</name>
    <name type="ORF">T26I12.140</name>
</gene>
<protein>
    <recommendedName>
        <fullName>Beta-hexosaminidase 1</fullName>
        <ecNumber>3.2.1.52</ecNumber>
    </recommendedName>
    <alternativeName>
        <fullName>Beta-GlcNAcase 1</fullName>
    </alternativeName>
    <alternativeName>
        <fullName>Beta-N-acetylhexosaminidase 1</fullName>
    </alternativeName>
    <alternativeName>
        <fullName>Beta-hexosaminidase 2</fullName>
        <shortName>AtHEX2</shortName>
    </alternativeName>
    <alternativeName>
        <fullName>N-acetyl-beta-glucosaminidase 1</fullName>
    </alternativeName>
</protein>
<keyword id="KW-1015">Disulfide bond</keyword>
<keyword id="KW-0325">Glycoprotein</keyword>
<keyword id="KW-0326">Glycosidase</keyword>
<keyword id="KW-0378">Hydrolase</keyword>
<keyword id="KW-1185">Reference proteome</keyword>
<keyword id="KW-0732">Signal</keyword>
<keyword id="KW-0926">Vacuole</keyword>
<accession>A7WM73</accession>
<accession>Q0WUA8</accession>
<accession>Q8LFK0</accession>
<accession>Q9M3C5</accession>
<evidence type="ECO:0000250" key="1"/>
<evidence type="ECO:0000255" key="2"/>
<evidence type="ECO:0000269" key="3">
    <source>
    </source>
</evidence>
<evidence type="ECO:0000269" key="4">
    <source>
    </source>
</evidence>
<evidence type="ECO:0000269" key="5">
    <source>
    </source>
</evidence>
<evidence type="ECO:0000305" key="6"/>
<dbReference type="EC" id="3.2.1.52"/>
<dbReference type="EMBL" id="AM493720">
    <property type="protein sequence ID" value="CAM35467.1"/>
    <property type="molecule type" value="mRNA"/>
</dbReference>
<dbReference type="EMBL" id="AL132954">
    <property type="protein sequence ID" value="CAB75760.1"/>
    <property type="status" value="ALT_SEQ"/>
    <property type="molecule type" value="Genomic_DNA"/>
</dbReference>
<dbReference type="EMBL" id="CP002686">
    <property type="protein sequence ID" value="AEE79360.1"/>
    <property type="molecule type" value="Genomic_DNA"/>
</dbReference>
<dbReference type="EMBL" id="AK227260">
    <property type="protein sequence ID" value="BAE99290.1"/>
    <property type="molecule type" value="mRNA"/>
</dbReference>
<dbReference type="EMBL" id="AY084801">
    <property type="protein sequence ID" value="AAM61367.1"/>
    <property type="status" value="ALT_INIT"/>
    <property type="molecule type" value="mRNA"/>
</dbReference>
<dbReference type="EMBL" id="BT000920">
    <property type="protein sequence ID" value="AAN41320.1"/>
    <property type="molecule type" value="mRNA"/>
</dbReference>
<dbReference type="PIR" id="T47665">
    <property type="entry name" value="T47665"/>
</dbReference>
<dbReference type="RefSeq" id="NP_567017.2">
    <property type="nucleotide sequence ID" value="NM_115384.4"/>
</dbReference>
<dbReference type="SMR" id="A7WM73"/>
<dbReference type="FunCoup" id="A7WM73">
    <property type="interactions" value="2150"/>
</dbReference>
<dbReference type="IntAct" id="A7WM73">
    <property type="interactions" value="1"/>
</dbReference>
<dbReference type="STRING" id="3702.A7WM73"/>
<dbReference type="CAZy" id="GH20">
    <property type="family name" value="Glycoside Hydrolase Family 20"/>
</dbReference>
<dbReference type="GlyCosmos" id="A7WM73">
    <property type="glycosylation" value="5 sites, No reported glycans"/>
</dbReference>
<dbReference type="GlyGen" id="A7WM73">
    <property type="glycosylation" value="6 sites"/>
</dbReference>
<dbReference type="PaxDb" id="3702-AT3G55260.1"/>
<dbReference type="ProMEX" id="A7WM73"/>
<dbReference type="ProteomicsDB" id="230220"/>
<dbReference type="EnsemblPlants" id="AT3G55260.1">
    <property type="protein sequence ID" value="AT3G55260.1"/>
    <property type="gene ID" value="AT3G55260"/>
</dbReference>
<dbReference type="GeneID" id="824692"/>
<dbReference type="Gramene" id="AT3G55260.1">
    <property type="protein sequence ID" value="AT3G55260.1"/>
    <property type="gene ID" value="AT3G55260"/>
</dbReference>
<dbReference type="KEGG" id="ath:AT3G55260"/>
<dbReference type="Araport" id="AT3G55260"/>
<dbReference type="TAIR" id="AT3G55260">
    <property type="gene designation" value="HEXO1"/>
</dbReference>
<dbReference type="eggNOG" id="KOG2499">
    <property type="taxonomic scope" value="Eukaryota"/>
</dbReference>
<dbReference type="HOGENOM" id="CLU_007082_0_4_1"/>
<dbReference type="InParanoid" id="A7WM73"/>
<dbReference type="OMA" id="SPKHVYT"/>
<dbReference type="OrthoDB" id="428480at2759"/>
<dbReference type="PhylomeDB" id="A7WM73"/>
<dbReference type="BioCyc" id="ARA:AT3G55260-MONOMER"/>
<dbReference type="BRENDA" id="3.2.1.52">
    <property type="organism ID" value="399"/>
</dbReference>
<dbReference type="PRO" id="PR:A7WM73"/>
<dbReference type="Proteomes" id="UP000006548">
    <property type="component" value="Chromosome 3"/>
</dbReference>
<dbReference type="ExpressionAtlas" id="A7WM73">
    <property type="expression patterns" value="baseline and differential"/>
</dbReference>
<dbReference type="GO" id="GO:0000325">
    <property type="term" value="C:plant-type vacuole"/>
    <property type="evidence" value="ECO:0007005"/>
    <property type="project" value="TAIR"/>
</dbReference>
<dbReference type="GO" id="GO:0099503">
    <property type="term" value="C:secretory vesicle"/>
    <property type="evidence" value="ECO:0007005"/>
    <property type="project" value="TAIR"/>
</dbReference>
<dbReference type="GO" id="GO:0005773">
    <property type="term" value="C:vacuole"/>
    <property type="evidence" value="ECO:0000314"/>
    <property type="project" value="TAIR"/>
</dbReference>
<dbReference type="GO" id="GO:0004563">
    <property type="term" value="F:beta-N-acetylhexosaminidase activity"/>
    <property type="evidence" value="ECO:0000314"/>
    <property type="project" value="TAIR"/>
</dbReference>
<dbReference type="GO" id="GO:0015929">
    <property type="term" value="F:hexosaminidase activity"/>
    <property type="evidence" value="ECO:0000314"/>
    <property type="project" value="TAIR"/>
</dbReference>
<dbReference type="GO" id="GO:0005975">
    <property type="term" value="P:carbohydrate metabolic process"/>
    <property type="evidence" value="ECO:0007669"/>
    <property type="project" value="InterPro"/>
</dbReference>
<dbReference type="CDD" id="cd06562">
    <property type="entry name" value="GH20_HexA_HexB-like"/>
    <property type="match status" value="1"/>
</dbReference>
<dbReference type="FunFam" id="3.20.20.80:FF:000063">
    <property type="entry name" value="Beta-hexosaminidase"/>
    <property type="match status" value="1"/>
</dbReference>
<dbReference type="FunFam" id="3.30.379.10:FF:000013">
    <property type="entry name" value="Beta-hexosaminidase"/>
    <property type="match status" value="1"/>
</dbReference>
<dbReference type="Gene3D" id="3.30.379.10">
    <property type="entry name" value="Chitobiase/beta-hexosaminidase domain 2-like"/>
    <property type="match status" value="1"/>
</dbReference>
<dbReference type="Gene3D" id="3.20.20.80">
    <property type="entry name" value="Glycosidases"/>
    <property type="match status" value="1"/>
</dbReference>
<dbReference type="InterPro" id="IPR025705">
    <property type="entry name" value="Beta_hexosaminidase_sua/sub"/>
</dbReference>
<dbReference type="InterPro" id="IPR015883">
    <property type="entry name" value="Glyco_hydro_20_cat"/>
</dbReference>
<dbReference type="InterPro" id="IPR017853">
    <property type="entry name" value="Glycoside_hydrolase_SF"/>
</dbReference>
<dbReference type="InterPro" id="IPR029018">
    <property type="entry name" value="Hex-like_dom2"/>
</dbReference>
<dbReference type="InterPro" id="IPR029019">
    <property type="entry name" value="HEX_eukaryotic_N"/>
</dbReference>
<dbReference type="PANTHER" id="PTHR22600">
    <property type="entry name" value="BETA-HEXOSAMINIDASE"/>
    <property type="match status" value="1"/>
</dbReference>
<dbReference type="PANTHER" id="PTHR22600:SF40">
    <property type="entry name" value="BETA-HEXOSAMINIDASE 1"/>
    <property type="match status" value="1"/>
</dbReference>
<dbReference type="Pfam" id="PF00728">
    <property type="entry name" value="Glyco_hydro_20"/>
    <property type="match status" value="1"/>
</dbReference>
<dbReference type="Pfam" id="PF14845">
    <property type="entry name" value="Glycohydro_20b2"/>
    <property type="match status" value="1"/>
</dbReference>
<dbReference type="PIRSF" id="PIRSF001093">
    <property type="entry name" value="B-hxosamndse_ab_euk"/>
    <property type="match status" value="1"/>
</dbReference>
<dbReference type="PRINTS" id="PR00738">
    <property type="entry name" value="GLHYDRLASE20"/>
</dbReference>
<dbReference type="SUPFAM" id="SSF51445">
    <property type="entry name" value="(Trans)glycosidases"/>
    <property type="match status" value="1"/>
</dbReference>
<dbReference type="SUPFAM" id="SSF55545">
    <property type="entry name" value="beta-N-acetylhexosaminidase-like domain"/>
    <property type="match status" value="1"/>
</dbReference>
<reference key="1">
    <citation type="journal article" date="2007" name="Plant Physiol.">
        <title>Enzymatic properties and subcellular localization of Arabidopsis beta-N-acetylhexosaminidases.</title>
        <authorList>
            <person name="Strasser R."/>
            <person name="Bondili J.S."/>
            <person name="Schoberer J."/>
            <person name="Svoboda B."/>
            <person name="Liebminger E."/>
            <person name="Glossl J."/>
            <person name="Altmann F."/>
            <person name="Steinkellner H."/>
            <person name="Mach L."/>
        </authorList>
    </citation>
    <scope>NUCLEOTIDE SEQUENCE [MRNA]</scope>
    <scope>SUBCELLULAR LOCATION</scope>
    <scope>TISSUE SPECIFICITY</scope>
    <scope>FUNCTION</scope>
    <scope>CATALYTIC ACTIVITY</scope>
    <scope>BIOPHYSICOCHEMICAL PROPERTIES</scope>
    <scope>GLYCOSYLATION</scope>
    <scope>GENE FAMILY</scope>
    <scope>NOMENCLATURE</scope>
</reference>
<reference key="2">
    <citation type="journal article" date="2000" name="Nature">
        <title>Sequence and analysis of chromosome 3 of the plant Arabidopsis thaliana.</title>
        <authorList>
            <person name="Salanoubat M."/>
            <person name="Lemcke K."/>
            <person name="Rieger M."/>
            <person name="Ansorge W."/>
            <person name="Unseld M."/>
            <person name="Fartmann B."/>
            <person name="Valle G."/>
            <person name="Bloecker H."/>
            <person name="Perez-Alonso M."/>
            <person name="Obermaier B."/>
            <person name="Delseny M."/>
            <person name="Boutry M."/>
            <person name="Grivell L.A."/>
            <person name="Mache R."/>
            <person name="Puigdomenech P."/>
            <person name="De Simone V."/>
            <person name="Choisne N."/>
            <person name="Artiguenave F."/>
            <person name="Robert C."/>
            <person name="Brottier P."/>
            <person name="Wincker P."/>
            <person name="Cattolico L."/>
            <person name="Weissenbach J."/>
            <person name="Saurin W."/>
            <person name="Quetier F."/>
            <person name="Schaefer M."/>
            <person name="Mueller-Auer S."/>
            <person name="Gabel C."/>
            <person name="Fuchs M."/>
            <person name="Benes V."/>
            <person name="Wurmbach E."/>
            <person name="Drzonek H."/>
            <person name="Erfle H."/>
            <person name="Jordan N."/>
            <person name="Bangert S."/>
            <person name="Wiedelmann R."/>
            <person name="Kranz H."/>
            <person name="Voss H."/>
            <person name="Holland R."/>
            <person name="Brandt P."/>
            <person name="Nyakatura G."/>
            <person name="Vezzi A."/>
            <person name="D'Angelo M."/>
            <person name="Pallavicini A."/>
            <person name="Toppo S."/>
            <person name="Simionati B."/>
            <person name="Conrad A."/>
            <person name="Hornischer K."/>
            <person name="Kauer G."/>
            <person name="Loehnert T.-H."/>
            <person name="Nordsiek G."/>
            <person name="Reichelt J."/>
            <person name="Scharfe M."/>
            <person name="Schoen O."/>
            <person name="Bargues M."/>
            <person name="Terol J."/>
            <person name="Climent J."/>
            <person name="Navarro P."/>
            <person name="Collado C."/>
            <person name="Perez-Perez A."/>
            <person name="Ottenwaelder B."/>
            <person name="Duchemin D."/>
            <person name="Cooke R."/>
            <person name="Laudie M."/>
            <person name="Berger-Llauro C."/>
            <person name="Purnelle B."/>
            <person name="Masuy D."/>
            <person name="de Haan M."/>
            <person name="Maarse A.C."/>
            <person name="Alcaraz J.-P."/>
            <person name="Cottet A."/>
            <person name="Casacuberta E."/>
            <person name="Monfort A."/>
            <person name="Argiriou A."/>
            <person name="Flores M."/>
            <person name="Liguori R."/>
            <person name="Vitale D."/>
            <person name="Mannhaupt G."/>
            <person name="Haase D."/>
            <person name="Schoof H."/>
            <person name="Rudd S."/>
            <person name="Zaccaria P."/>
            <person name="Mewes H.-W."/>
            <person name="Mayer K.F.X."/>
            <person name="Kaul S."/>
            <person name="Town C.D."/>
            <person name="Koo H.L."/>
            <person name="Tallon L.J."/>
            <person name="Jenkins J."/>
            <person name="Rooney T."/>
            <person name="Rizzo M."/>
            <person name="Walts A."/>
            <person name="Utterback T."/>
            <person name="Fujii C.Y."/>
            <person name="Shea T.P."/>
            <person name="Creasy T.H."/>
            <person name="Haas B."/>
            <person name="Maiti R."/>
            <person name="Wu D."/>
            <person name="Peterson J."/>
            <person name="Van Aken S."/>
            <person name="Pai G."/>
            <person name="Militscher J."/>
            <person name="Sellers P."/>
            <person name="Gill J.E."/>
            <person name="Feldblyum T.V."/>
            <person name="Preuss D."/>
            <person name="Lin X."/>
            <person name="Nierman W.C."/>
            <person name="Salzberg S.L."/>
            <person name="White O."/>
            <person name="Venter J.C."/>
            <person name="Fraser C.M."/>
            <person name="Kaneko T."/>
            <person name="Nakamura Y."/>
            <person name="Sato S."/>
            <person name="Kato T."/>
            <person name="Asamizu E."/>
            <person name="Sasamoto S."/>
            <person name="Kimura T."/>
            <person name="Idesawa K."/>
            <person name="Kawashima K."/>
            <person name="Kishida Y."/>
            <person name="Kiyokawa C."/>
            <person name="Kohara M."/>
            <person name="Matsumoto M."/>
            <person name="Matsuno A."/>
            <person name="Muraki A."/>
            <person name="Nakayama S."/>
            <person name="Nakazaki N."/>
            <person name="Shinpo S."/>
            <person name="Takeuchi C."/>
            <person name="Wada T."/>
            <person name="Watanabe A."/>
            <person name="Yamada M."/>
            <person name="Yasuda M."/>
            <person name="Tabata S."/>
        </authorList>
    </citation>
    <scope>NUCLEOTIDE SEQUENCE [LARGE SCALE GENOMIC DNA]</scope>
    <source>
        <strain>cv. Columbia</strain>
    </source>
</reference>
<reference key="3">
    <citation type="journal article" date="2017" name="Plant J.">
        <title>Araport11: a complete reannotation of the Arabidopsis thaliana reference genome.</title>
        <authorList>
            <person name="Cheng C.Y."/>
            <person name="Krishnakumar V."/>
            <person name="Chan A.P."/>
            <person name="Thibaud-Nissen F."/>
            <person name="Schobel S."/>
            <person name="Town C.D."/>
        </authorList>
    </citation>
    <scope>GENOME REANNOTATION</scope>
    <source>
        <strain>cv. Columbia</strain>
    </source>
</reference>
<reference key="4">
    <citation type="submission" date="2006-07" db="EMBL/GenBank/DDBJ databases">
        <title>Large-scale analysis of RIKEN Arabidopsis full-length (RAFL) cDNAs.</title>
        <authorList>
            <person name="Totoki Y."/>
            <person name="Seki M."/>
            <person name="Ishida J."/>
            <person name="Nakajima M."/>
            <person name="Enju A."/>
            <person name="Kamiya A."/>
            <person name="Narusaka M."/>
            <person name="Shin-i T."/>
            <person name="Nakagawa M."/>
            <person name="Sakamoto N."/>
            <person name="Oishi K."/>
            <person name="Kohara Y."/>
            <person name="Kobayashi M."/>
            <person name="Toyoda A."/>
            <person name="Sakaki Y."/>
            <person name="Sakurai T."/>
            <person name="Iida K."/>
            <person name="Akiyama K."/>
            <person name="Satou M."/>
            <person name="Toyoda T."/>
            <person name="Konagaya A."/>
            <person name="Carninci P."/>
            <person name="Kawai J."/>
            <person name="Hayashizaki Y."/>
            <person name="Shinozaki K."/>
        </authorList>
    </citation>
    <scope>NUCLEOTIDE SEQUENCE [LARGE SCALE MRNA]</scope>
    <source>
        <strain>cv. Columbia</strain>
    </source>
</reference>
<reference key="5">
    <citation type="submission" date="2002-03" db="EMBL/GenBank/DDBJ databases">
        <title>Full-length cDNA from Arabidopsis thaliana.</title>
        <authorList>
            <person name="Brover V.V."/>
            <person name="Troukhan M.E."/>
            <person name="Alexandrov N.A."/>
            <person name="Lu Y.-P."/>
            <person name="Flavell R.B."/>
            <person name="Feldmann K.A."/>
        </authorList>
    </citation>
    <scope>NUCLEOTIDE SEQUENCE [LARGE SCALE MRNA] OF 79-541</scope>
</reference>
<reference key="6">
    <citation type="journal article" date="2003" name="Science">
        <title>Empirical analysis of transcriptional activity in the Arabidopsis genome.</title>
        <authorList>
            <person name="Yamada K."/>
            <person name="Lim J."/>
            <person name="Dale J.M."/>
            <person name="Chen H."/>
            <person name="Shinn P."/>
            <person name="Palm C.J."/>
            <person name="Southwick A.M."/>
            <person name="Wu H.C."/>
            <person name="Kim C.J."/>
            <person name="Nguyen M."/>
            <person name="Pham P.K."/>
            <person name="Cheuk R.F."/>
            <person name="Karlin-Newmann G."/>
            <person name="Liu S.X."/>
            <person name="Lam B."/>
            <person name="Sakano H."/>
            <person name="Wu T."/>
            <person name="Yu G."/>
            <person name="Miranda M."/>
            <person name="Quach H.L."/>
            <person name="Tripp M."/>
            <person name="Chang C.H."/>
            <person name="Lee J.M."/>
            <person name="Toriumi M.J."/>
            <person name="Chan M.M."/>
            <person name="Tang C.C."/>
            <person name="Onodera C.S."/>
            <person name="Deng J.M."/>
            <person name="Akiyama K."/>
            <person name="Ansari Y."/>
            <person name="Arakawa T."/>
            <person name="Banh J."/>
            <person name="Banno F."/>
            <person name="Bowser L."/>
            <person name="Brooks S.Y."/>
            <person name="Carninci P."/>
            <person name="Chao Q."/>
            <person name="Choy N."/>
            <person name="Enju A."/>
            <person name="Goldsmith A.D."/>
            <person name="Gurjal M."/>
            <person name="Hansen N.F."/>
            <person name="Hayashizaki Y."/>
            <person name="Johnson-Hopson C."/>
            <person name="Hsuan V.W."/>
            <person name="Iida K."/>
            <person name="Karnes M."/>
            <person name="Khan S."/>
            <person name="Koesema E."/>
            <person name="Ishida J."/>
            <person name="Jiang P.X."/>
            <person name="Jones T."/>
            <person name="Kawai J."/>
            <person name="Kamiya A."/>
            <person name="Meyers C."/>
            <person name="Nakajima M."/>
            <person name="Narusaka M."/>
            <person name="Seki M."/>
            <person name="Sakurai T."/>
            <person name="Satou M."/>
            <person name="Tamse R."/>
            <person name="Vaysberg M."/>
            <person name="Wallender E.K."/>
            <person name="Wong C."/>
            <person name="Yamamura Y."/>
            <person name="Yuan S."/>
            <person name="Shinozaki K."/>
            <person name="Davis R.W."/>
            <person name="Theologis A."/>
            <person name="Ecker J.R."/>
        </authorList>
    </citation>
    <scope>NUCLEOTIDE SEQUENCE [LARGE SCALE MRNA] OF 97-541</scope>
    <source>
        <strain>cv. Columbia</strain>
    </source>
</reference>
<reference key="7">
    <citation type="journal article" date="2007" name="J. Biol. Chem.">
        <title>Biosynthesis of truncated N-linked oligosaccharides results from non-orthologous hexosaminidase-mediated mechanisms in nematodes, plants, and insects.</title>
        <authorList>
            <person name="Gutternigg M."/>
            <person name="Kretschmer-Lubich D."/>
            <person name="Paschinger K."/>
            <person name="Rendic D."/>
            <person name="Hader J."/>
            <person name="Geier P."/>
            <person name="Ranftl R."/>
            <person name="Jantsch V."/>
            <person name="Lochnit G."/>
            <person name="Wilson I.B.H."/>
        </authorList>
    </citation>
    <scope>FUNCTION</scope>
    <scope>BIOPHYSICOCHEMICAL PROPERTIES</scope>
    <scope>ACTIVITY REGULATION</scope>
    <scope>REVIEW</scope>
</reference>
<reference key="8">
    <citation type="journal article" date="2011" name="J. Biol. Chem.">
        <title>Beta-N-acetylhexosaminidases HEXO1 and HEXO3 are responsible for the formation of paucimannosidic N-glycans in Arabidopsis thaliana.</title>
        <authorList>
            <person name="Liebminger E."/>
            <person name="Veit C."/>
            <person name="Pabst M."/>
            <person name="Batoux M."/>
            <person name="Zipfel C."/>
            <person name="Altmann F."/>
            <person name="Mach L."/>
            <person name="Strasser R."/>
        </authorList>
    </citation>
    <scope>FUNCTION</scope>
    <scope>DISRUPTION PHENOTYPE</scope>
    <scope>SUBCELLULAR LOCATION</scope>
    <source>
        <strain>cv. Columbia</strain>
    </source>
</reference>
<name>HEXO1_ARATH</name>
<proteinExistence type="evidence at protein level"/>
<feature type="signal peptide" evidence="2">
    <location>
        <begin position="1"/>
        <end position="20"/>
    </location>
</feature>
<feature type="chain" id="PRO_0000420286" description="Beta-hexosaminidase 1">
    <location>
        <begin position="21"/>
        <end position="541"/>
    </location>
</feature>
<feature type="active site" description="Proton donor" evidence="1">
    <location>
        <position position="332"/>
    </location>
</feature>
<feature type="glycosylation site" description="N-linked (GlcNAc...) asparagine" evidence="2">
    <location>
        <position position="44"/>
    </location>
</feature>
<feature type="glycosylation site" description="N-linked (GlcNAc...) asparagine" evidence="2">
    <location>
        <position position="304"/>
    </location>
</feature>
<feature type="glycosylation site" description="N-linked (GlcNAc...) asparagine" evidence="2">
    <location>
        <position position="340"/>
    </location>
</feature>
<feature type="glycosylation site" description="N-linked (GlcNAc...) asparagine" evidence="2">
    <location>
        <position position="352"/>
    </location>
</feature>
<feature type="glycosylation site" description="N-linked (GlcNAc...) asparagine" evidence="2">
    <location>
        <position position="497"/>
    </location>
</feature>
<feature type="disulfide bond" evidence="1">
    <location>
        <begin position="295"/>
        <end position="337"/>
    </location>
</feature>
<feature type="disulfide bond" evidence="1">
    <location>
        <begin position="511"/>
        <end position="538"/>
    </location>
</feature>
<feature type="sequence conflict" description="In Ref. 5; AAM61367." evidence="6" ref="5">
    <original>G</original>
    <variation>V</variation>
    <location>
        <position position="84"/>
    </location>
</feature>
<feature type="sequence conflict" description="In Ref. 4; BAE99290." evidence="6" ref="4">
    <original>D</original>
    <variation>G</variation>
    <location>
        <position position="181"/>
    </location>
</feature>
<feature type="sequence conflict" description="In Ref. 4; BAE99290." evidence="6" ref="4">
    <original>W</original>
    <variation>R</variation>
    <location>
        <position position="347"/>
    </location>
</feature>